<gene>
    <name evidence="1" type="primary">rnc</name>
    <name type="ordered locus">AZC_2004</name>
</gene>
<accession>A8I3B5</accession>
<protein>
    <recommendedName>
        <fullName evidence="1">Ribonuclease 3</fullName>
        <ecNumber evidence="1">3.1.26.3</ecNumber>
    </recommendedName>
    <alternativeName>
        <fullName evidence="1">Ribonuclease III</fullName>
        <shortName evidence="1">RNase III</shortName>
    </alternativeName>
</protein>
<feature type="chain" id="PRO_1000194406" description="Ribonuclease 3">
    <location>
        <begin position="1"/>
        <end position="235"/>
    </location>
</feature>
<feature type="domain" description="RNase III" evidence="1">
    <location>
        <begin position="7"/>
        <end position="135"/>
    </location>
</feature>
<feature type="domain" description="DRBM" evidence="1">
    <location>
        <begin position="160"/>
        <end position="229"/>
    </location>
</feature>
<feature type="active site" evidence="1">
    <location>
        <position position="52"/>
    </location>
</feature>
<feature type="active site" evidence="1">
    <location>
        <position position="124"/>
    </location>
</feature>
<feature type="binding site" evidence="1">
    <location>
        <position position="48"/>
    </location>
    <ligand>
        <name>Mg(2+)</name>
        <dbReference type="ChEBI" id="CHEBI:18420"/>
    </ligand>
</feature>
<feature type="binding site" evidence="1">
    <location>
        <position position="121"/>
    </location>
    <ligand>
        <name>Mg(2+)</name>
        <dbReference type="ChEBI" id="CHEBI:18420"/>
    </ligand>
</feature>
<feature type="binding site" evidence="1">
    <location>
        <position position="124"/>
    </location>
    <ligand>
        <name>Mg(2+)</name>
        <dbReference type="ChEBI" id="CHEBI:18420"/>
    </ligand>
</feature>
<name>RNC_AZOC5</name>
<dbReference type="EC" id="3.1.26.3" evidence="1"/>
<dbReference type="EMBL" id="AP009384">
    <property type="protein sequence ID" value="BAF88002.1"/>
    <property type="molecule type" value="Genomic_DNA"/>
</dbReference>
<dbReference type="RefSeq" id="WP_012170531.1">
    <property type="nucleotide sequence ID" value="NC_009937.1"/>
</dbReference>
<dbReference type="SMR" id="A8I3B5"/>
<dbReference type="STRING" id="438753.AZC_2004"/>
<dbReference type="KEGG" id="azc:AZC_2004"/>
<dbReference type="eggNOG" id="COG0571">
    <property type="taxonomic scope" value="Bacteria"/>
</dbReference>
<dbReference type="HOGENOM" id="CLU_000907_1_1_5"/>
<dbReference type="Proteomes" id="UP000000270">
    <property type="component" value="Chromosome"/>
</dbReference>
<dbReference type="GO" id="GO:0005737">
    <property type="term" value="C:cytoplasm"/>
    <property type="evidence" value="ECO:0007669"/>
    <property type="project" value="UniProtKB-SubCell"/>
</dbReference>
<dbReference type="GO" id="GO:0003725">
    <property type="term" value="F:double-stranded RNA binding"/>
    <property type="evidence" value="ECO:0007669"/>
    <property type="project" value="TreeGrafter"/>
</dbReference>
<dbReference type="GO" id="GO:0046872">
    <property type="term" value="F:metal ion binding"/>
    <property type="evidence" value="ECO:0007669"/>
    <property type="project" value="UniProtKB-KW"/>
</dbReference>
<dbReference type="GO" id="GO:0004525">
    <property type="term" value="F:ribonuclease III activity"/>
    <property type="evidence" value="ECO:0007669"/>
    <property type="project" value="UniProtKB-UniRule"/>
</dbReference>
<dbReference type="GO" id="GO:0019843">
    <property type="term" value="F:rRNA binding"/>
    <property type="evidence" value="ECO:0007669"/>
    <property type="project" value="UniProtKB-KW"/>
</dbReference>
<dbReference type="GO" id="GO:0006397">
    <property type="term" value="P:mRNA processing"/>
    <property type="evidence" value="ECO:0007669"/>
    <property type="project" value="UniProtKB-UniRule"/>
</dbReference>
<dbReference type="GO" id="GO:0010468">
    <property type="term" value="P:regulation of gene expression"/>
    <property type="evidence" value="ECO:0007669"/>
    <property type="project" value="TreeGrafter"/>
</dbReference>
<dbReference type="GO" id="GO:0006364">
    <property type="term" value="P:rRNA processing"/>
    <property type="evidence" value="ECO:0007669"/>
    <property type="project" value="UniProtKB-UniRule"/>
</dbReference>
<dbReference type="GO" id="GO:0008033">
    <property type="term" value="P:tRNA processing"/>
    <property type="evidence" value="ECO:0007669"/>
    <property type="project" value="UniProtKB-KW"/>
</dbReference>
<dbReference type="CDD" id="cd10845">
    <property type="entry name" value="DSRM_RNAse_III_family"/>
    <property type="match status" value="1"/>
</dbReference>
<dbReference type="CDD" id="cd00593">
    <property type="entry name" value="RIBOc"/>
    <property type="match status" value="1"/>
</dbReference>
<dbReference type="FunFam" id="1.10.1520.10:FF:000001">
    <property type="entry name" value="Ribonuclease 3"/>
    <property type="match status" value="1"/>
</dbReference>
<dbReference type="Gene3D" id="3.30.160.20">
    <property type="match status" value="1"/>
</dbReference>
<dbReference type="Gene3D" id="1.10.1520.10">
    <property type="entry name" value="Ribonuclease III domain"/>
    <property type="match status" value="1"/>
</dbReference>
<dbReference type="HAMAP" id="MF_00104">
    <property type="entry name" value="RNase_III"/>
    <property type="match status" value="1"/>
</dbReference>
<dbReference type="InterPro" id="IPR014720">
    <property type="entry name" value="dsRBD_dom"/>
</dbReference>
<dbReference type="InterPro" id="IPR011907">
    <property type="entry name" value="RNase_III"/>
</dbReference>
<dbReference type="InterPro" id="IPR000999">
    <property type="entry name" value="RNase_III_dom"/>
</dbReference>
<dbReference type="InterPro" id="IPR036389">
    <property type="entry name" value="RNase_III_sf"/>
</dbReference>
<dbReference type="NCBIfam" id="TIGR02191">
    <property type="entry name" value="RNaseIII"/>
    <property type="match status" value="1"/>
</dbReference>
<dbReference type="PANTHER" id="PTHR11207:SF0">
    <property type="entry name" value="RIBONUCLEASE 3"/>
    <property type="match status" value="1"/>
</dbReference>
<dbReference type="PANTHER" id="PTHR11207">
    <property type="entry name" value="RIBONUCLEASE III"/>
    <property type="match status" value="1"/>
</dbReference>
<dbReference type="Pfam" id="PF00035">
    <property type="entry name" value="dsrm"/>
    <property type="match status" value="1"/>
</dbReference>
<dbReference type="Pfam" id="PF14622">
    <property type="entry name" value="Ribonucleas_3_3"/>
    <property type="match status" value="1"/>
</dbReference>
<dbReference type="SMART" id="SM00358">
    <property type="entry name" value="DSRM"/>
    <property type="match status" value="1"/>
</dbReference>
<dbReference type="SMART" id="SM00535">
    <property type="entry name" value="RIBOc"/>
    <property type="match status" value="1"/>
</dbReference>
<dbReference type="SUPFAM" id="SSF54768">
    <property type="entry name" value="dsRNA-binding domain-like"/>
    <property type="match status" value="1"/>
</dbReference>
<dbReference type="SUPFAM" id="SSF69065">
    <property type="entry name" value="RNase III domain-like"/>
    <property type="match status" value="1"/>
</dbReference>
<dbReference type="PROSITE" id="PS50137">
    <property type="entry name" value="DS_RBD"/>
    <property type="match status" value="1"/>
</dbReference>
<dbReference type="PROSITE" id="PS00517">
    <property type="entry name" value="RNASE_3_1"/>
    <property type="match status" value="1"/>
</dbReference>
<dbReference type="PROSITE" id="PS50142">
    <property type="entry name" value="RNASE_3_2"/>
    <property type="match status" value="1"/>
</dbReference>
<evidence type="ECO:0000255" key="1">
    <source>
        <dbReference type="HAMAP-Rule" id="MF_00104"/>
    </source>
</evidence>
<sequence length="235" mass="25499">MSETQDFAALEARLGHSFADRSHLVLALTHISSVKGQAVRVRSYQRLEFLGDHVLGSVVSHMLYAAFPKAEEGELSRRLAELVREEACAEVAQDMGLGPYLRLGPGEAQSGARQRRAILADVAEAVVAAVYLDGGYEAASALVERFWRGRLEAPRRPLRDPKTVLQEWAQARGLPPPVYRDVERSGPDHAPRFRVAVDLPGLECAEAEGGSKQTAQKAAASAFLAREGVVTESGE</sequence>
<reference key="1">
    <citation type="submission" date="2007-04" db="EMBL/GenBank/DDBJ databases">
        <title>Complete genome sequence of the nitrogen-fixing bacterium Azorhizobium caulinodans ORS571.</title>
        <authorList>
            <person name="Lee K.B."/>
            <person name="Backer P.D."/>
            <person name="Aono T."/>
            <person name="Liu C.T."/>
            <person name="Suzuki S."/>
            <person name="Suzuki T."/>
            <person name="Kaneko T."/>
            <person name="Yamada M."/>
            <person name="Tabata S."/>
            <person name="Kupfer D.M."/>
            <person name="Najar F.Z."/>
            <person name="Wiley G.B."/>
            <person name="Roe B."/>
            <person name="Binnewies T."/>
            <person name="Ussery D."/>
            <person name="Vereecke D."/>
            <person name="Gevers D."/>
            <person name="Holsters M."/>
            <person name="Oyaizu H."/>
        </authorList>
    </citation>
    <scope>NUCLEOTIDE SEQUENCE [LARGE SCALE GENOMIC DNA]</scope>
    <source>
        <strain>ATCC 43989 / DSM 5975 / JCM 20966 / LMG 6465 / NBRC 14845 / NCIMB 13405 / ORS 571</strain>
    </source>
</reference>
<proteinExistence type="inferred from homology"/>
<comment type="function">
    <text evidence="1">Digests double-stranded RNA. Involved in the processing of primary rRNA transcript to yield the immediate precursors to the large and small rRNAs (23S and 16S). Processes some mRNAs, and tRNAs when they are encoded in the rRNA operon. Processes pre-crRNA and tracrRNA of type II CRISPR loci if present in the organism.</text>
</comment>
<comment type="catalytic activity">
    <reaction evidence="1">
        <text>Endonucleolytic cleavage to 5'-phosphomonoester.</text>
        <dbReference type="EC" id="3.1.26.3"/>
    </reaction>
</comment>
<comment type="cofactor">
    <cofactor evidence="1">
        <name>Mg(2+)</name>
        <dbReference type="ChEBI" id="CHEBI:18420"/>
    </cofactor>
</comment>
<comment type="subunit">
    <text evidence="1">Homodimer.</text>
</comment>
<comment type="subcellular location">
    <subcellularLocation>
        <location evidence="1">Cytoplasm</location>
    </subcellularLocation>
</comment>
<comment type="similarity">
    <text evidence="1">Belongs to the ribonuclease III family.</text>
</comment>
<organism>
    <name type="scientific">Azorhizobium caulinodans (strain ATCC 43989 / DSM 5975 / JCM 20966 / LMG 6465 / NBRC 14845 / NCIMB 13405 / ORS 571)</name>
    <dbReference type="NCBI Taxonomy" id="438753"/>
    <lineage>
        <taxon>Bacteria</taxon>
        <taxon>Pseudomonadati</taxon>
        <taxon>Pseudomonadota</taxon>
        <taxon>Alphaproteobacteria</taxon>
        <taxon>Hyphomicrobiales</taxon>
        <taxon>Xanthobacteraceae</taxon>
        <taxon>Azorhizobium</taxon>
    </lineage>
</organism>
<keyword id="KW-0963">Cytoplasm</keyword>
<keyword id="KW-0255">Endonuclease</keyword>
<keyword id="KW-0378">Hydrolase</keyword>
<keyword id="KW-0460">Magnesium</keyword>
<keyword id="KW-0479">Metal-binding</keyword>
<keyword id="KW-0507">mRNA processing</keyword>
<keyword id="KW-0540">Nuclease</keyword>
<keyword id="KW-1185">Reference proteome</keyword>
<keyword id="KW-0694">RNA-binding</keyword>
<keyword id="KW-0698">rRNA processing</keyword>
<keyword id="KW-0699">rRNA-binding</keyword>
<keyword id="KW-0819">tRNA processing</keyword>